<keyword id="KW-1003">Cell membrane</keyword>
<keyword id="KW-0175">Coiled coil</keyword>
<keyword id="KW-0472">Membrane</keyword>
<keyword id="KW-0677">Repeat</keyword>
<keyword id="KW-0964">Secreted</keyword>
<keyword id="KW-0732">Signal</keyword>
<name>MSP9_PLAF8</name>
<gene>
    <name evidence="2" type="primary">MSP9</name>
    <name evidence="2" type="synonym">ABRA</name>
    <name evidence="8" type="ORF">PFBG_03986</name>
</gene>
<dbReference type="EMBL" id="KE123629">
    <property type="protein sequence ID" value="EUR68021.1"/>
    <property type="molecule type" value="Genomic_DNA"/>
</dbReference>
<dbReference type="EnsemblProtists" id="EUR68021">
    <property type="protein sequence ID" value="EUR68021"/>
    <property type="gene ID" value="PFBG_03986"/>
</dbReference>
<dbReference type="OrthoDB" id="4394at418107"/>
<dbReference type="Proteomes" id="UP000030688">
    <property type="component" value="Unassembled WGS sequence"/>
</dbReference>
<dbReference type="GO" id="GO:0005576">
    <property type="term" value="C:extracellular region"/>
    <property type="evidence" value="ECO:0007669"/>
    <property type="project" value="UniProtKB-SubCell"/>
</dbReference>
<dbReference type="GO" id="GO:0005634">
    <property type="term" value="C:nucleus"/>
    <property type="evidence" value="ECO:0007669"/>
    <property type="project" value="TreeGrafter"/>
</dbReference>
<dbReference type="GO" id="GO:0005886">
    <property type="term" value="C:plasma membrane"/>
    <property type="evidence" value="ECO:0007669"/>
    <property type="project" value="UniProtKB-SubCell"/>
</dbReference>
<dbReference type="PANTHER" id="PTHR13275:SF4">
    <property type="entry name" value="VACUOLAR PROTEIN SORTING-ASSOCIATED PROTEIN 72 HOMOLOG"/>
    <property type="match status" value="1"/>
</dbReference>
<dbReference type="PANTHER" id="PTHR13275">
    <property type="entry name" value="YL-1 PROTEIN TRANSCRIPTION FACTOR-LIKE 1"/>
    <property type="match status" value="1"/>
</dbReference>
<comment type="function">
    <text evidence="2">During the asexual blood stage, involved in the sialic acid-independent (SAID) merozoite invasion of host erythrocytes by binding to host SLC4A1/Band 3 protein on the surface of the host erythrocyte.</text>
</comment>
<comment type="subunit">
    <text evidence="2">Forms a complex composed of MSP1, MSP6, MSP7, MSP9 and MSP3; within the complex, MSP6 and MSP9 mediate the binding to the host erythrocyte. Interacts with MSP1 subunits p19 and p42; the interaction is direct. Interacts with host SLC4A1/Band 3 protein (via the 5ABC region). MSP1 subunits p19 or p42, and MSP9 form a co-ligand complex that interacts with host SLC4A1/Band 3 protein.</text>
</comment>
<comment type="subcellular location">
    <subcellularLocation>
        <location evidence="5">Cell membrane</location>
        <topology evidence="7">Peripheral membrane protein</topology>
        <orientation evidence="5">Extracellular side</orientation>
    </subcellularLocation>
    <subcellularLocation>
        <location evidence="5">Parasitophorous vacuole lumen</location>
    </subcellularLocation>
    <subcellularLocation>
        <location evidence="5">Secreted</location>
    </subcellularLocation>
    <text evidence="5">Localizes to the merozoite surface at the time of schizont rupture.</text>
</comment>
<comment type="developmental stage">
    <text evidence="5">Expressed during the asexual blood stage, specifically during the trophozoite, schizont and merozoite stages (at protein level).</text>
</comment>
<comment type="PTM">
    <text evidence="1">Not glycosylated.</text>
</comment>
<comment type="similarity">
    <text evidence="7">Belongs to the plasmodium ABRA family.</text>
</comment>
<comment type="caution">
    <text evidence="2">A truncated form of MSP9 has serine protease activity in vitro; however, it is not clear if this is physiologically relevant (By similarity). Also, the putative residues forming the catalytic triad (His-55, Asp-94, and Ser-190) are not conserved in P.vivax, P.knowlesi, and P.cynomolgi orthologs casting a doubt on the physiological relevance of the protease activity (By similarity).</text>
</comment>
<proteinExistence type="evidence at protein level"/>
<accession>W7F8N2</accession>
<evidence type="ECO:0000250" key="1">
    <source>
        <dbReference type="UniProtKB" id="P22620"/>
    </source>
</evidence>
<evidence type="ECO:0000250" key="2">
    <source>
        <dbReference type="UniProtKB" id="Q8I5D2"/>
    </source>
</evidence>
<evidence type="ECO:0000255" key="3"/>
<evidence type="ECO:0000256" key="4">
    <source>
        <dbReference type="SAM" id="MobiDB-lite"/>
    </source>
</evidence>
<evidence type="ECO:0000269" key="5">
    <source>
    </source>
</evidence>
<evidence type="ECO:0000303" key="6">
    <source>
    </source>
</evidence>
<evidence type="ECO:0000305" key="7"/>
<evidence type="ECO:0000312" key="8">
    <source>
        <dbReference type="EMBL" id="EUR68021.1"/>
    </source>
</evidence>
<evidence type="ECO:0000312" key="9">
    <source>
        <dbReference type="Proteomes" id="UP000030688"/>
    </source>
</evidence>
<feature type="signal peptide" evidence="3">
    <location>
        <begin position="1"/>
        <end position="23"/>
    </location>
</feature>
<feature type="chain" id="PRO_5004894699" description="Merozoite surface protein 9" evidence="3">
    <location>
        <begin position="24"/>
        <end position="744"/>
    </location>
</feature>
<feature type="repeat" description="1" evidence="1">
    <location>
        <begin position="226"/>
        <end position="231"/>
    </location>
</feature>
<feature type="repeat" description="2" evidence="1">
    <location>
        <begin position="232"/>
        <end position="237"/>
    </location>
</feature>
<feature type="repeat" description="3" evidence="1">
    <location>
        <begin position="238"/>
        <end position="243"/>
    </location>
</feature>
<feature type="repeat" description="4" evidence="1">
    <location>
        <begin position="244"/>
        <end position="249"/>
    </location>
</feature>
<feature type="repeat" description="5" evidence="1">
    <location>
        <begin position="250"/>
        <end position="255"/>
    </location>
</feature>
<feature type="repeat" description="6" evidence="1">
    <location>
        <begin position="256"/>
        <end position="261"/>
    </location>
</feature>
<feature type="repeat" description="7" evidence="1">
    <location>
        <begin position="262"/>
        <end position="267"/>
    </location>
</feature>
<feature type="repeat" description="8" evidence="1">
    <location>
        <begin position="268"/>
        <end position="273"/>
    </location>
</feature>
<feature type="region of interest" description="Interaction with MSP1 and host SLC4A1/Band 3" evidence="2">
    <location>
        <begin position="77"/>
        <end position="235"/>
    </location>
</feature>
<feature type="region of interest" description="Disordered" evidence="4">
    <location>
        <begin position="202"/>
        <end position="282"/>
    </location>
</feature>
<feature type="region of interest" description="8 X 6 AA tandem repeats of [VT]-N-D-[ED]-[ED]-D" evidence="1">
    <location>
        <begin position="226"/>
        <end position="273"/>
    </location>
</feature>
<feature type="region of interest" description="Interaction with MSP1 and host SLC4A1/Band 3" evidence="2">
    <location>
        <begin position="364"/>
        <end position="528"/>
    </location>
</feature>
<feature type="region of interest" description="Disordered" evidence="4">
    <location>
        <begin position="459"/>
        <end position="487"/>
    </location>
</feature>
<feature type="region of interest" description="Disordered" evidence="4">
    <location>
        <begin position="512"/>
        <end position="540"/>
    </location>
</feature>
<feature type="region of interest" description="Disordered" evidence="4">
    <location>
        <begin position="666"/>
        <end position="744"/>
    </location>
</feature>
<feature type="coiled-coil region" evidence="3">
    <location>
        <begin position="644"/>
        <end position="734"/>
    </location>
</feature>
<feature type="compositionally biased region" description="Polar residues" evidence="4">
    <location>
        <begin position="211"/>
        <end position="224"/>
    </location>
</feature>
<feature type="compositionally biased region" description="Acidic residues" evidence="4">
    <location>
        <begin position="226"/>
        <end position="274"/>
    </location>
</feature>
<feature type="compositionally biased region" description="Basic and acidic residues" evidence="4">
    <location>
        <begin position="459"/>
        <end position="473"/>
    </location>
</feature>
<feature type="compositionally biased region" description="Low complexity" evidence="4">
    <location>
        <begin position="512"/>
        <end position="521"/>
    </location>
</feature>
<feature type="compositionally biased region" description="Basic and acidic residues" evidence="4">
    <location>
        <begin position="672"/>
        <end position="698"/>
    </location>
</feature>
<feature type="compositionally biased region" description="Basic and acidic residues" evidence="4">
    <location>
        <begin position="706"/>
        <end position="719"/>
    </location>
</feature>
<feature type="compositionally biased region" description="Acidic residues" evidence="4">
    <location>
        <begin position="720"/>
        <end position="734"/>
    </location>
</feature>
<reference evidence="9" key="1">
    <citation type="submission" date="2013-02" db="EMBL/GenBank/DDBJ databases">
        <title>The Genome Sequence of Plasmodium falciparum 7G8.</title>
        <authorList>
            <consortium name="The Broad Institute Genome Sequencing Platform"/>
            <consortium name="The Broad Institute Genome Sequencing Center for Infectious Disease"/>
            <person name="Neafsey D."/>
            <person name="Cheeseman I."/>
            <person name="Volkman S."/>
            <person name="Adams J."/>
            <person name="Walker B."/>
            <person name="Young S.K."/>
            <person name="Zeng Q."/>
            <person name="Gargeya S."/>
            <person name="Fitzgerald M."/>
            <person name="Haas B."/>
            <person name="Abouelleil A."/>
            <person name="Alvarado L."/>
            <person name="Arachchi H.M."/>
            <person name="Berlin A.M."/>
            <person name="Chapman S.B."/>
            <person name="Dewar J."/>
            <person name="Goldberg J."/>
            <person name="Griggs A."/>
            <person name="Gujja S."/>
            <person name="Hansen M."/>
            <person name="Howarth C."/>
            <person name="Imamovic A."/>
            <person name="Larimer J."/>
            <person name="McCowan C."/>
            <person name="Murphy C."/>
            <person name="Neiman D."/>
            <person name="Pearson M."/>
            <person name="Priest M."/>
            <person name="Roberts A."/>
            <person name="Saif S."/>
            <person name="Shea T."/>
            <person name="Sisk P."/>
            <person name="Sykes S."/>
            <person name="Wortman J."/>
            <person name="Nusbaum C."/>
            <person name="Birren B."/>
        </authorList>
    </citation>
    <scope>NUCLEOTIDE SEQUENCE [LARGE SCALE GENOMIC DNA]</scope>
    <source>
        <strain evidence="9">7G8</strain>
    </source>
</reference>
<reference evidence="7" key="2">
    <citation type="journal article" date="1987" name="J. Immunol.">
        <title>Monoclonal antibody characterization of Plasmodium falciparum antigens in immune complexes formed when schizonts rupture in the presence of immune serum.</title>
        <authorList>
            <person name="Chulay J.D."/>
            <person name="Lyon J.A."/>
            <person name="Haynes J.D."/>
            <person name="Meierovics A.I."/>
            <person name="Atkinson C.T."/>
            <person name="Aikawa M."/>
        </authorList>
    </citation>
    <scope>SUBCELLULAR LOCATION</scope>
    <scope>DEVELOPMENTAL STAGE</scope>
</reference>
<organism evidence="9">
    <name type="scientific">Plasmodium falciparum (isolate 7G8)</name>
    <dbReference type="NCBI Taxonomy" id="57266"/>
    <lineage>
        <taxon>Eukaryota</taxon>
        <taxon>Sar</taxon>
        <taxon>Alveolata</taxon>
        <taxon>Apicomplexa</taxon>
        <taxon>Aconoidasida</taxon>
        <taxon>Haemosporida</taxon>
        <taxon>Plasmodiidae</taxon>
        <taxon>Plasmodium</taxon>
        <taxon>Plasmodium (Laverania)</taxon>
    </lineage>
</organism>
<protein>
    <recommendedName>
        <fullName evidence="2">Merozoite surface protein 9</fullName>
    </recommendedName>
    <alternativeName>
        <fullName evidence="2">Acidic basic repeat antigen</fullName>
    </alternativeName>
    <alternativeName>
        <fullName evidence="6">p101 protein</fullName>
    </alternativeName>
</protein>
<sequence length="744" mass="86752">MMNMKIVLFSLLLFVIRWNIISCNKNDKNQGVDMNVLNNYENLFKFVKCEYCNEHTYVKGKKAPSDPQCADIKEECKELLKEKQYTDSVTYLMDGFKSANNSANNGKKNNAEEMKNLVNFLQSHKKLIKALKKNIESIQNKKHLIYKNKSYNPLLLSCVKKMNMLKENVDYIQKNQNLFKELMNQKATYSFVNTKKKIISLKSQGHKKETSQNQNENNDNQKYQEVNDEDDVNDEEDTNDDEDTNDEEDTNDDEDTNDDEDTNDEEDTNDEEDHENNNATAYELGIVPVNDVLNVNMKNMITGNNFMDVVKNTLAQSGGLGSNDLINFLNQGKEIGENLLNITKMNLGDKNNLESFPLDELNMLKDNLINYEFILDNLKTSVLNKLKDLLLRLLYKAYVSYKKRKAQEKGLPEPTVTNEEYVEELKKGILDMGIKLLFSKVKSLLKKLKNKIFPKKKEDNQAVDTKSMEEPKVKAQPALRGVEPTEDSNIMNSINNVMDEIDFFEKELIENNNTPNVVPPTQSKKKNKNETVSGMDENFDNHPENYFKEEYYYDENDDMEVKVKKIGVTLKKFEPLKNGNVSETIKLIHLGNKDKKHIEAINNDIQIIKQELQAIYNELMNYTNGNKNIQQIFQQNILENDVLNQETEEEMEKQVEAITKQIEAEVDALAPKNKEEEEKEKEKEKEKEEKEKEEKEKEEKEEEEKEKEKEKEEKEKEEKEKEEEQEEEEEEEIVPENLTTEESK</sequence>